<organism>
    <name type="scientific">Burkholderia orbicola (strain AU 1054)</name>
    <dbReference type="NCBI Taxonomy" id="331271"/>
    <lineage>
        <taxon>Bacteria</taxon>
        <taxon>Pseudomonadati</taxon>
        <taxon>Pseudomonadota</taxon>
        <taxon>Betaproteobacteria</taxon>
        <taxon>Burkholderiales</taxon>
        <taxon>Burkholderiaceae</taxon>
        <taxon>Burkholderia</taxon>
        <taxon>Burkholderia cepacia complex</taxon>
        <taxon>Burkholderia orbicola</taxon>
    </lineage>
</organism>
<feature type="chain" id="PRO_1000021931" description="RNA pyrophosphohydrolase">
    <location>
        <begin position="1"/>
        <end position="214"/>
    </location>
</feature>
<feature type="domain" description="Nudix hydrolase" evidence="1">
    <location>
        <begin position="6"/>
        <end position="149"/>
    </location>
</feature>
<feature type="short sequence motif" description="Nudix box">
    <location>
        <begin position="38"/>
        <end position="59"/>
    </location>
</feature>
<comment type="function">
    <text evidence="1">Accelerates the degradation of transcripts by removing pyrophosphate from the 5'-end of triphosphorylated RNA, leading to a more labile monophosphorylated state that can stimulate subsequent ribonuclease cleavage.</text>
</comment>
<comment type="cofactor">
    <cofactor evidence="1">
        <name>a divalent metal cation</name>
        <dbReference type="ChEBI" id="CHEBI:60240"/>
    </cofactor>
</comment>
<comment type="similarity">
    <text evidence="1">Belongs to the Nudix hydrolase family. RppH subfamily.</text>
</comment>
<dbReference type="EC" id="3.6.1.-" evidence="1"/>
<dbReference type="EMBL" id="CP000378">
    <property type="protein sequence ID" value="ABF75018.1"/>
    <property type="molecule type" value="Genomic_DNA"/>
</dbReference>
<dbReference type="SMR" id="Q1BZD7"/>
<dbReference type="HOGENOM" id="CLU_087195_0_1_4"/>
<dbReference type="GO" id="GO:0016462">
    <property type="term" value="F:pyrophosphatase activity"/>
    <property type="evidence" value="ECO:0007669"/>
    <property type="project" value="UniProtKB-ARBA"/>
</dbReference>
<dbReference type="CDD" id="cd03671">
    <property type="entry name" value="NUDIX_Ap4A_hydrolase_plant_like"/>
    <property type="match status" value="1"/>
</dbReference>
<dbReference type="Gene3D" id="3.90.79.10">
    <property type="entry name" value="Nucleoside Triphosphate Pyrophosphohydrolase"/>
    <property type="match status" value="1"/>
</dbReference>
<dbReference type="HAMAP" id="MF_00298">
    <property type="entry name" value="Nudix_RppH"/>
    <property type="match status" value="1"/>
</dbReference>
<dbReference type="InterPro" id="IPR020476">
    <property type="entry name" value="Nudix_hydrolase"/>
</dbReference>
<dbReference type="InterPro" id="IPR015797">
    <property type="entry name" value="NUDIX_hydrolase-like_dom_sf"/>
</dbReference>
<dbReference type="InterPro" id="IPR020084">
    <property type="entry name" value="NUDIX_hydrolase_CS"/>
</dbReference>
<dbReference type="InterPro" id="IPR000086">
    <property type="entry name" value="NUDIX_hydrolase_dom"/>
</dbReference>
<dbReference type="InterPro" id="IPR022927">
    <property type="entry name" value="RppH"/>
</dbReference>
<dbReference type="NCBIfam" id="NF001935">
    <property type="entry name" value="PRK00714.1-2"/>
    <property type="match status" value="1"/>
</dbReference>
<dbReference type="NCBIfam" id="NF001937">
    <property type="entry name" value="PRK00714.1-4"/>
    <property type="match status" value="1"/>
</dbReference>
<dbReference type="NCBIfam" id="NF001938">
    <property type="entry name" value="PRK00714.1-5"/>
    <property type="match status" value="1"/>
</dbReference>
<dbReference type="PANTHER" id="PTHR43736">
    <property type="entry name" value="ADP-RIBOSE PYROPHOSPHATASE"/>
    <property type="match status" value="1"/>
</dbReference>
<dbReference type="PANTHER" id="PTHR43736:SF1">
    <property type="entry name" value="DIHYDRONEOPTERIN TRIPHOSPHATE DIPHOSPHATASE"/>
    <property type="match status" value="1"/>
</dbReference>
<dbReference type="Pfam" id="PF00293">
    <property type="entry name" value="NUDIX"/>
    <property type="match status" value="1"/>
</dbReference>
<dbReference type="PRINTS" id="PR00502">
    <property type="entry name" value="NUDIXFAMILY"/>
</dbReference>
<dbReference type="SUPFAM" id="SSF55811">
    <property type="entry name" value="Nudix"/>
    <property type="match status" value="1"/>
</dbReference>
<dbReference type="PROSITE" id="PS51462">
    <property type="entry name" value="NUDIX"/>
    <property type="match status" value="1"/>
</dbReference>
<dbReference type="PROSITE" id="PS00893">
    <property type="entry name" value="NUDIX_BOX"/>
    <property type="match status" value="1"/>
</dbReference>
<gene>
    <name evidence="1" type="primary">rppH</name>
    <name evidence="1" type="synonym">nudH</name>
    <name type="ordered locus">Bcen_0104</name>
</gene>
<proteinExistence type="inferred from homology"/>
<name>RPPH_BURO1</name>
<reference key="1">
    <citation type="submission" date="2006-05" db="EMBL/GenBank/DDBJ databases">
        <title>Complete sequence of chromosome 1 of Burkholderia cenocepacia AU 1054.</title>
        <authorList>
            <consortium name="US DOE Joint Genome Institute"/>
            <person name="Copeland A."/>
            <person name="Lucas S."/>
            <person name="Lapidus A."/>
            <person name="Barry K."/>
            <person name="Detter J.C."/>
            <person name="Glavina del Rio T."/>
            <person name="Hammon N."/>
            <person name="Israni S."/>
            <person name="Dalin E."/>
            <person name="Tice H."/>
            <person name="Pitluck S."/>
            <person name="Chain P."/>
            <person name="Malfatti S."/>
            <person name="Shin M."/>
            <person name="Vergez L."/>
            <person name="Schmutz J."/>
            <person name="Larimer F."/>
            <person name="Land M."/>
            <person name="Hauser L."/>
            <person name="Kyrpides N."/>
            <person name="Lykidis A."/>
            <person name="LiPuma J.J."/>
            <person name="Konstantinidis K."/>
            <person name="Tiedje J.M."/>
            <person name="Richardson P."/>
        </authorList>
    </citation>
    <scope>NUCLEOTIDE SEQUENCE [LARGE SCALE GENOMIC DNA]</scope>
    <source>
        <strain>AU 1054</strain>
    </source>
</reference>
<accession>Q1BZD7</accession>
<protein>
    <recommendedName>
        <fullName evidence="1">RNA pyrophosphohydrolase</fullName>
        <ecNumber evidence="1">3.6.1.-</ecNumber>
    </recommendedName>
    <alternativeName>
        <fullName evidence="1">(Di)nucleoside polyphosphate hydrolase</fullName>
    </alternativeName>
</protein>
<sequence>MLDREGFRPNVGIILLNARNEVFWGKRLREHSWQFPQGGIKYGETPMQAMYRELHEETGLHPEHVKIIGRTRDWLRYEVPDKFIKREVRGHYRGQKQIWFLLRMVGRDCDICLRATDHPEFDAWRWNEYWVPLDAVIEFKRDVYQLALTELSRFLRRPAQRAEKPRGPRVSRYPRVIGAQAQTLTIVDTSVVCSEIEVEASTLDEMPPHVIVGK</sequence>
<evidence type="ECO:0000255" key="1">
    <source>
        <dbReference type="HAMAP-Rule" id="MF_00298"/>
    </source>
</evidence>
<keyword id="KW-0378">Hydrolase</keyword>